<comment type="function">
    <text evidence="3 5">Plays a role in pre-mRNA splicing as component of the U4/U6-U5 tri-snRNP complex that is involved in spliceosome assembly, and as component of the precatalytic spliceosome (spliceosome B complex) (PubMed:28781166). The heptameric LSM2-8 complex binds specifically to the 3'-terminal U-tract of U6 snRNA (PubMed:10523320).</text>
</comment>
<comment type="subunit">
    <text evidence="3 4 5">Component of the precatalytic spliceosome (spliceosome B complex) (PubMed:28781166). Component of the U4/U6-U5 tri-snRNP complex, a building block of the precatalytic spliceosome (spliceosome B complex) (PubMed:10523320, PubMed:26912367, PubMed:28781166). The U4/U6-U5 tri-snRNP complex is composed of the U4, U6 and U5 snRNAs and at least PRPF3, PRPF4, PRPF6, PRPF8, PRPF31, SNRNP200, TXNL4A, SNRNP40, SNRPB, SNRPD1, SNRPD2, SNRPD3, SNRPE, SNRPF, SNRPG, DDX23, CD2BP2, PPIH, SNU13, EFTUD2, SART1 and USP39, plus LSM2, LSM3, LSM4, LSM5, LSM6, LSM7 and LSM8 (PubMed:26912367). LSM2, LSM3, LSM4, LSM5, LSM6, LSM7 and LSM8 form a heptameric, ring-shaped subcomplex (the LSM2-8 complex) that is part of the U4/U6-U5 tri-snRNP complex and the precatalytic spliceosome (PubMed:10523320, PubMed:26912367, PubMed:28781166).</text>
</comment>
<comment type="interaction">
    <interactant intactId="EBI-372521">
        <id>Q9Y4Z0</id>
    </interactant>
    <interactant intactId="EBI-739580">
        <id>Q13137</id>
        <label>CALCOCO2</label>
    </interactant>
    <organismsDiffer>false</organismsDiffer>
    <experiments>7</experiments>
</comment>
<comment type="interaction">
    <interactant intactId="EBI-372521">
        <id>Q9Y4Z0</id>
    </interactant>
    <interactant intactId="EBI-371922">
        <id>Q96B26</id>
        <label>EXOSC8</label>
    </interactant>
    <organismsDiffer>false</organismsDiffer>
    <experiments>3</experiments>
</comment>
<comment type="interaction">
    <interactant intactId="EBI-372521">
        <id>Q9Y4Z0</id>
    </interactant>
    <interactant intactId="EBI-11745923">
        <id>O60861-1</id>
        <label>GAS7</label>
    </interactant>
    <organismsDiffer>false</organismsDiffer>
    <experiments>3</experiments>
</comment>
<comment type="interaction">
    <interactant intactId="EBI-372521">
        <id>Q9Y4Z0</id>
    </interactant>
    <interactant intactId="EBI-745305">
        <id>Q13422</id>
        <label>IKZF1</label>
    </interactant>
    <organismsDiffer>false</organismsDiffer>
    <experiments>3</experiments>
</comment>
<comment type="interaction">
    <interactant intactId="EBI-372521">
        <id>Q9Y4Z0</id>
    </interactant>
    <interactant intactId="EBI-2686809">
        <id>Q96JM7</id>
        <label>L3MBTL3</label>
    </interactant>
    <organismsDiffer>false</organismsDiffer>
    <experiments>3</experiments>
</comment>
<comment type="interaction">
    <interactant intactId="EBI-372521">
        <id>Q9Y4Z0</id>
    </interactant>
    <interactant intactId="EBI-347619">
        <id>O15116</id>
        <label>LSM1</label>
    </interactant>
    <organismsDiffer>false</organismsDiffer>
    <experiments>6</experiments>
</comment>
<comment type="interaction">
    <interactant intactId="EBI-372521">
        <id>Q9Y4Z0</id>
    </interactant>
    <interactant intactId="EBI-348372">
        <id>Q9UK45</id>
        <label>LSM7</label>
    </interactant>
    <organismsDiffer>false</organismsDiffer>
    <experiments>13</experiments>
</comment>
<comment type="interaction">
    <interactant intactId="EBI-372521">
        <id>Q9Y4Z0</id>
    </interactant>
    <interactant intactId="EBI-347779">
        <id>O95777</id>
        <label>LSM8</label>
    </interactant>
    <organismsDiffer>false</organismsDiffer>
    <experiments>6</experiments>
</comment>
<comment type="interaction">
    <interactant intactId="EBI-372521">
        <id>Q9Y4Z0</id>
    </interactant>
    <interactant intactId="EBI-1050964">
        <id>O43586</id>
        <label>PSTPIP1</label>
    </interactant>
    <organismsDiffer>false</organismsDiffer>
    <experiments>6</experiments>
</comment>
<comment type="interaction">
    <interactant intactId="EBI-372521">
        <id>Q9Y4Z0</id>
    </interactant>
    <interactant intactId="EBI-10235384">
        <id>Q96DT7</id>
        <label>ZBTB10</label>
    </interactant>
    <organismsDiffer>false</organismsDiffer>
    <experiments>3</experiments>
</comment>
<comment type="subcellular location">
    <subcellularLocation>
        <location evidence="3 4 5">Nucleus</location>
    </subcellularLocation>
</comment>
<comment type="similarity">
    <text evidence="7">Belongs to the snRNP Sm proteins family.</text>
</comment>
<reference key="1">
    <citation type="journal article" date="1999" name="EMBO J.">
        <title>Sm and Sm-like proteins assemble in two related complexes of deep evolutionary origin.</title>
        <authorList>
            <person name="Salgado-Garrido J."/>
            <person name="Bragado-Nilsson E."/>
            <person name="Kandels-Lewis S."/>
            <person name="Seraphin B."/>
        </authorList>
    </citation>
    <scope>NUCLEOTIDE SEQUENCE [MRNA]</scope>
    <source>
        <tissue>Liver</tissue>
    </source>
</reference>
<reference key="2">
    <citation type="journal article" date="1999" name="EMBO J.">
        <title>A doughnut-shaped heteromer of human Sm-like proteins binds to the 3'-end of U6 snRNA, thereby facilitating U4/U6 duplex formation in vitro.</title>
        <authorList>
            <person name="Achsel T."/>
            <person name="Brahms H."/>
            <person name="Kastner B."/>
            <person name="Bachi A."/>
            <person name="Wilm M."/>
            <person name="Luehrmann R."/>
        </authorList>
    </citation>
    <scope>NUCLEOTIDE SEQUENCE [MRNA]</scope>
    <scope>PARTIAL PROTEIN SEQUENCE</scope>
    <scope>SUBUNIT</scope>
    <scope>FUNCTION</scope>
    <scope>SUBCELLULAR LOCATION</scope>
</reference>
<reference key="3">
    <citation type="journal article" date="2000" name="Proc. Natl. Acad. Sci. U.S.A.">
        <title>Gene expression profiling in the human hypothalamus-pituitary-adrenal axis and full-length cDNA cloning.</title>
        <authorList>
            <person name="Hu R.-M."/>
            <person name="Han Z.-G."/>
            <person name="Song H.-D."/>
            <person name="Peng Y.-D."/>
            <person name="Huang Q.-H."/>
            <person name="Ren S.-X."/>
            <person name="Gu Y.-J."/>
            <person name="Huang C.-H."/>
            <person name="Li Y.-B."/>
            <person name="Jiang C.-L."/>
            <person name="Fu G."/>
            <person name="Zhang Q.-H."/>
            <person name="Gu B.-W."/>
            <person name="Dai M."/>
            <person name="Mao Y.-F."/>
            <person name="Gao G.-F."/>
            <person name="Rong R."/>
            <person name="Ye M."/>
            <person name="Zhou J."/>
            <person name="Xu S.-H."/>
            <person name="Gu J."/>
            <person name="Shi J.-X."/>
            <person name="Jin W.-R."/>
            <person name="Zhang C.-K."/>
            <person name="Wu T.-M."/>
            <person name="Huang G.-Y."/>
            <person name="Chen Z."/>
            <person name="Chen M.-D."/>
            <person name="Chen J.-L."/>
        </authorList>
    </citation>
    <scope>NUCLEOTIDE SEQUENCE [LARGE SCALE MRNA]</scope>
    <source>
        <tissue>Hypothalamus</tissue>
    </source>
</reference>
<reference key="4">
    <citation type="submission" date="2000-04" db="EMBL/GenBank/DDBJ databases">
        <authorList>
            <person name="Chan E.K.L."/>
        </authorList>
    </citation>
    <scope>NUCLEOTIDE SEQUENCE [MRNA]</scope>
</reference>
<reference key="5">
    <citation type="journal article" date="2004" name="Genome Res.">
        <title>The status, quality, and expansion of the NIH full-length cDNA project: the Mammalian Gene Collection (MGC).</title>
        <authorList>
            <consortium name="The MGC Project Team"/>
        </authorList>
    </citation>
    <scope>NUCLEOTIDE SEQUENCE [LARGE SCALE MRNA]</scope>
    <source>
        <tissue>Lung</tissue>
    </source>
</reference>
<reference key="6">
    <citation type="submission" date="2007-07" db="UniProtKB">
        <authorList>
            <person name="Bienvenut W.V."/>
            <person name="Matallanas D."/>
            <person name="Cooper W.N."/>
            <person name="Kolch W."/>
        </authorList>
    </citation>
    <scope>PROTEIN SEQUENCE OF 1-20</scope>
    <scope>ACETYLATION AT MET-1</scope>
    <scope>IDENTIFICATION BY MASS SPECTROMETRY</scope>
    <source>
        <tissue>Mammary carcinoma</tissue>
    </source>
</reference>
<reference key="7">
    <citation type="journal article" date="2011" name="BMC Syst. Biol.">
        <title>Initial characterization of the human central proteome.</title>
        <authorList>
            <person name="Burkard T.R."/>
            <person name="Planyavsky M."/>
            <person name="Kaupe I."/>
            <person name="Breitwieser F.P."/>
            <person name="Buerckstuemmer T."/>
            <person name="Bennett K.L."/>
            <person name="Superti-Furga G."/>
            <person name="Colinge J."/>
        </authorList>
    </citation>
    <scope>IDENTIFICATION BY MASS SPECTROMETRY [LARGE SCALE ANALYSIS]</scope>
</reference>
<reference key="8">
    <citation type="journal article" date="2014" name="J. Proteomics">
        <title>An enzyme assisted RP-RPLC approach for in-depth analysis of human liver phosphoproteome.</title>
        <authorList>
            <person name="Bian Y."/>
            <person name="Song C."/>
            <person name="Cheng K."/>
            <person name="Dong M."/>
            <person name="Wang F."/>
            <person name="Huang J."/>
            <person name="Sun D."/>
            <person name="Wang L."/>
            <person name="Ye M."/>
            <person name="Zou H."/>
        </authorList>
    </citation>
    <scope>IDENTIFICATION BY MASS SPECTROMETRY [LARGE SCALE ANALYSIS]</scope>
    <source>
        <tissue>Liver</tissue>
    </source>
</reference>
<reference key="9">
    <citation type="journal article" date="2015" name="Proteomics">
        <title>N-terminome analysis of the human mitochondrial proteome.</title>
        <authorList>
            <person name="Vaca Jacome A.S."/>
            <person name="Rabilloud T."/>
            <person name="Schaeffer-Reiss C."/>
            <person name="Rompais M."/>
            <person name="Ayoub D."/>
            <person name="Lane L."/>
            <person name="Bairoch A."/>
            <person name="Van Dorsselaer A."/>
            <person name="Carapito C."/>
        </authorList>
    </citation>
    <scope>IDENTIFICATION BY MASS SPECTROMETRY [LARGE SCALE ANALYSIS]</scope>
</reference>
<reference key="10">
    <citation type="journal article" date="2017" name="Nat. Struct. Mol. Biol.">
        <title>Site-specific mapping of the human SUMO proteome reveals co-modification with phosphorylation.</title>
        <authorList>
            <person name="Hendriks I.A."/>
            <person name="Lyon D."/>
            <person name="Young C."/>
            <person name="Jensen L.J."/>
            <person name="Vertegaal A.C."/>
            <person name="Nielsen M.L."/>
        </authorList>
    </citation>
    <scope>SUMOYLATION [LARGE SCALE ANALYSIS] AT LYS-80</scope>
    <scope>IDENTIFICATION BY MASS SPECTROMETRY [LARGE SCALE ANALYSIS]</scope>
</reference>
<reference evidence="8" key="11">
    <citation type="journal article" date="2016" name="Science">
        <title>Molecular architecture of the human U4/U6.U5 tri-snRNP.</title>
        <authorList>
            <person name="Agafonov D.E."/>
            <person name="Kastner B."/>
            <person name="Dybkov O."/>
            <person name="Hofele R.V."/>
            <person name="Liu W.T."/>
            <person name="Urlaub H."/>
            <person name="Luhrmann R."/>
            <person name="Stark H."/>
        </authorList>
    </citation>
    <scope>STRUCTURE BY ELECTRON MICROSCOPY (7.00 ANGSTROMS)</scope>
    <scope>SUBCELLULAR LOCATION</scope>
    <scope>SUBUNIT</scope>
    <scope>IDENTIFICATION BY MASS SPECTROMETRY</scope>
</reference>
<reference evidence="9" key="12">
    <citation type="journal article" date="2017" name="Cell">
        <title>Cryo-EM Structure of a Pre-catalytic Human Spliceosome Primed for Activation.</title>
        <authorList>
            <person name="Bertram K."/>
            <person name="Agafonov D.E."/>
            <person name="Dybkov O."/>
            <person name="Haselbach D."/>
            <person name="Leelaram M.N."/>
            <person name="Will C.L."/>
            <person name="Urlaub H."/>
            <person name="Kastner B."/>
            <person name="Luhrmann R."/>
            <person name="Stark H."/>
        </authorList>
    </citation>
    <scope>STRUCTURE BY ELECTRON MICROSCOPY (4.50 ANGSTROMS)</scope>
    <scope>FUNCTION</scope>
    <scope>SUBCELLULAR LOCATION</scope>
    <scope>SUBUNIT</scope>
    <scope>IDENTIFICATION BY MASS SPECTROMETRY</scope>
</reference>
<name>LSM4_HUMAN</name>
<gene>
    <name type="primary">LSM4</name>
</gene>
<evidence type="ECO:0000255" key="1">
    <source>
        <dbReference type="PROSITE-ProRule" id="PRU01346"/>
    </source>
</evidence>
<evidence type="ECO:0000256" key="2">
    <source>
        <dbReference type="SAM" id="MobiDB-lite"/>
    </source>
</evidence>
<evidence type="ECO:0000269" key="3">
    <source>
    </source>
</evidence>
<evidence type="ECO:0000269" key="4">
    <source>
    </source>
</evidence>
<evidence type="ECO:0000269" key="5">
    <source>
    </source>
</evidence>
<evidence type="ECO:0000269" key="6">
    <source ref="6"/>
</evidence>
<evidence type="ECO:0000305" key="7"/>
<evidence type="ECO:0007744" key="8">
    <source>
        <dbReference type="PDB" id="3JCR"/>
    </source>
</evidence>
<evidence type="ECO:0007744" key="9">
    <source>
        <dbReference type="PDB" id="5O9Z"/>
    </source>
</evidence>
<evidence type="ECO:0007744" key="10">
    <source>
    </source>
</evidence>
<protein>
    <recommendedName>
        <fullName>U6 snRNA-associated Sm-like protein LSm4</fullName>
    </recommendedName>
    <alternativeName>
        <fullName>Glycine-rich protein</fullName>
        <shortName>GRP</shortName>
    </alternativeName>
</protein>
<dbReference type="EMBL" id="AJ238096">
    <property type="protein sequence ID" value="CAB45867.1"/>
    <property type="molecule type" value="mRNA"/>
</dbReference>
<dbReference type="EMBL" id="AF182290">
    <property type="protein sequence ID" value="AAD56228.1"/>
    <property type="molecule type" value="mRNA"/>
</dbReference>
<dbReference type="EMBL" id="AF117235">
    <property type="protein sequence ID" value="AAF17216.1"/>
    <property type="molecule type" value="mRNA"/>
</dbReference>
<dbReference type="EMBL" id="AF251218">
    <property type="protein sequence ID" value="AAF90055.1"/>
    <property type="molecule type" value="mRNA"/>
</dbReference>
<dbReference type="EMBL" id="BC000387">
    <property type="protein sequence ID" value="AAH00387.1"/>
    <property type="molecule type" value="mRNA"/>
</dbReference>
<dbReference type="EMBL" id="BC003652">
    <property type="protein sequence ID" value="AAH03652.1"/>
    <property type="molecule type" value="mRNA"/>
</dbReference>
<dbReference type="EMBL" id="BC022198">
    <property type="protein sequence ID" value="AAH22198.1"/>
    <property type="molecule type" value="mRNA"/>
</dbReference>
<dbReference type="EMBL" id="BC023665">
    <property type="protein sequence ID" value="AAH23665.1"/>
    <property type="molecule type" value="mRNA"/>
</dbReference>
<dbReference type="CCDS" id="CCDS12374.1"/>
<dbReference type="RefSeq" id="NP_036453.1">
    <property type="nucleotide sequence ID" value="NM_012321.5"/>
</dbReference>
<dbReference type="PDB" id="3JCR">
    <property type="method" value="EM"/>
    <property type="resolution" value="7.00 A"/>
    <property type="chains" value="4=1-139"/>
</dbReference>
<dbReference type="PDB" id="5O9Z">
    <property type="method" value="EM"/>
    <property type="resolution" value="4.50 A"/>
    <property type="chains" value="q=1-139"/>
</dbReference>
<dbReference type="PDB" id="6AH0">
    <property type="method" value="EM"/>
    <property type="resolution" value="5.70 A"/>
    <property type="chains" value="s=1-139"/>
</dbReference>
<dbReference type="PDB" id="6AHD">
    <property type="method" value="EM"/>
    <property type="resolution" value="3.80 A"/>
    <property type="chains" value="s=1-139"/>
</dbReference>
<dbReference type="PDB" id="6QW6">
    <property type="method" value="EM"/>
    <property type="resolution" value="2.92 A"/>
    <property type="chains" value="64=1-139"/>
</dbReference>
<dbReference type="PDB" id="6QX9">
    <property type="method" value="EM"/>
    <property type="resolution" value="3.28 A"/>
    <property type="chains" value="64=1-139"/>
</dbReference>
<dbReference type="PDB" id="7ABG">
    <property type="method" value="EM"/>
    <property type="resolution" value="7.80 A"/>
    <property type="chains" value="C=1-139"/>
</dbReference>
<dbReference type="PDB" id="8H6E">
    <property type="method" value="EM"/>
    <property type="resolution" value="3.20 A"/>
    <property type="chains" value="6c=1-139"/>
</dbReference>
<dbReference type="PDB" id="8H6J">
    <property type="method" value="EM"/>
    <property type="resolution" value="3.25 A"/>
    <property type="chains" value="6c=1-139"/>
</dbReference>
<dbReference type="PDB" id="8H6K">
    <property type="method" value="EM"/>
    <property type="resolution" value="2.70 A"/>
    <property type="chains" value="6c=1-139"/>
</dbReference>
<dbReference type="PDB" id="8H6L">
    <property type="method" value="EM"/>
    <property type="resolution" value="2.60 A"/>
    <property type="chains" value="6c=1-139"/>
</dbReference>
<dbReference type="PDB" id="8QO9">
    <property type="method" value="EM"/>
    <property type="resolution" value="5.29 A"/>
    <property type="chains" value="64=1-139"/>
</dbReference>
<dbReference type="PDB" id="8QXD">
    <property type="method" value="EM"/>
    <property type="resolution" value="9.60 A"/>
    <property type="chains" value="64=1-139"/>
</dbReference>
<dbReference type="PDB" id="8QZS">
    <property type="method" value="EM"/>
    <property type="resolution" value="4.10 A"/>
    <property type="chains" value="64=1-139"/>
</dbReference>
<dbReference type="PDB" id="8R08">
    <property type="method" value="EM"/>
    <property type="resolution" value="6.10 A"/>
    <property type="chains" value="64=1-139"/>
</dbReference>
<dbReference type="PDB" id="8R09">
    <property type="method" value="EM"/>
    <property type="resolution" value="4.30 A"/>
    <property type="chains" value="64=1-139"/>
</dbReference>
<dbReference type="PDB" id="8R0A">
    <property type="method" value="EM"/>
    <property type="resolution" value="5.80 A"/>
    <property type="chains" value="64=1-139"/>
</dbReference>
<dbReference type="PDB" id="8R0B">
    <property type="method" value="EM"/>
    <property type="resolution" value="4.40 A"/>
    <property type="chains" value="64=1-139"/>
</dbReference>
<dbReference type="PDB" id="8RM5">
    <property type="method" value="EM"/>
    <property type="resolution" value="6.90 A"/>
    <property type="chains" value="64=1-139"/>
</dbReference>
<dbReference type="PDBsum" id="3JCR"/>
<dbReference type="PDBsum" id="5O9Z"/>
<dbReference type="PDBsum" id="6AH0"/>
<dbReference type="PDBsum" id="6AHD"/>
<dbReference type="PDBsum" id="6QW6"/>
<dbReference type="PDBsum" id="6QX9"/>
<dbReference type="PDBsum" id="7ABG"/>
<dbReference type="PDBsum" id="8H6E"/>
<dbReference type="PDBsum" id="8H6J"/>
<dbReference type="PDBsum" id="8H6K"/>
<dbReference type="PDBsum" id="8H6L"/>
<dbReference type="PDBsum" id="8QO9"/>
<dbReference type="PDBsum" id="8QXD"/>
<dbReference type="PDBsum" id="8QZS"/>
<dbReference type="PDBsum" id="8R08"/>
<dbReference type="PDBsum" id="8R09"/>
<dbReference type="PDBsum" id="8R0A"/>
<dbReference type="PDBsum" id="8R0B"/>
<dbReference type="PDBsum" id="8RM5"/>
<dbReference type="EMDB" id="EMD-11695"/>
<dbReference type="EMDB" id="EMD-18529"/>
<dbReference type="EMDB" id="EMD-18718"/>
<dbReference type="EMDB" id="EMD-18781"/>
<dbReference type="EMDB" id="EMD-18786"/>
<dbReference type="EMDB" id="EMD-18787"/>
<dbReference type="EMDB" id="EMD-18788"/>
<dbReference type="EMDB" id="EMD-18789"/>
<dbReference type="EMDB" id="EMD-19349"/>
<dbReference type="EMDB" id="EMD-34500"/>
<dbReference type="EMDB" id="EMD-34505"/>
<dbReference type="EMDB" id="EMD-34507"/>
<dbReference type="EMDB" id="EMD-34508"/>
<dbReference type="EMDB" id="EMD-3766"/>
<dbReference type="EMDB" id="EMD-4658"/>
<dbReference type="EMDB" id="EMD-4665"/>
<dbReference type="EMDB" id="EMD-9621"/>
<dbReference type="EMDB" id="EMD-9624"/>
<dbReference type="SMR" id="Q9Y4Z0"/>
<dbReference type="BioGRID" id="117336">
    <property type="interactions" value="178"/>
</dbReference>
<dbReference type="ComplexPortal" id="CPX-2391">
    <property type="entry name" value="U4/U6.U5 small nuclear ribonucleoprotein complex"/>
</dbReference>
<dbReference type="CORUM" id="Q9Y4Z0"/>
<dbReference type="DIP" id="DIP-31209N"/>
<dbReference type="FunCoup" id="Q9Y4Z0">
    <property type="interactions" value="1458"/>
</dbReference>
<dbReference type="IntAct" id="Q9Y4Z0">
    <property type="interactions" value="82"/>
</dbReference>
<dbReference type="MINT" id="Q9Y4Z0"/>
<dbReference type="STRING" id="9606.ENSP00000469468"/>
<dbReference type="GlyGen" id="Q9Y4Z0">
    <property type="glycosylation" value="1 site, 1 O-linked glycan (1 site)"/>
</dbReference>
<dbReference type="iPTMnet" id="Q9Y4Z0"/>
<dbReference type="MetOSite" id="Q9Y4Z0"/>
<dbReference type="PhosphoSitePlus" id="Q9Y4Z0"/>
<dbReference type="SwissPalm" id="Q9Y4Z0"/>
<dbReference type="BioMuta" id="LSM4"/>
<dbReference type="DMDM" id="10720082"/>
<dbReference type="jPOST" id="Q9Y4Z0"/>
<dbReference type="MassIVE" id="Q9Y4Z0"/>
<dbReference type="PaxDb" id="9606-ENSP00000469468"/>
<dbReference type="PeptideAtlas" id="Q9Y4Z0"/>
<dbReference type="ProteomicsDB" id="86267"/>
<dbReference type="Pumba" id="Q9Y4Z0"/>
<dbReference type="Antibodypedia" id="28019">
    <property type="antibodies" value="213 antibodies from 26 providers"/>
</dbReference>
<dbReference type="DNASU" id="25804"/>
<dbReference type="Ensembl" id="ENST00000593829.6">
    <property type="protein sequence ID" value="ENSP00000469468.2"/>
    <property type="gene ID" value="ENSG00000130520.11"/>
</dbReference>
<dbReference type="GeneID" id="25804"/>
<dbReference type="KEGG" id="hsa:25804"/>
<dbReference type="MANE-Select" id="ENST00000593829.6">
    <property type="protein sequence ID" value="ENSP00000469468.2"/>
    <property type="RefSeq nucleotide sequence ID" value="NM_012321.5"/>
    <property type="RefSeq protein sequence ID" value="NP_036453.1"/>
</dbReference>
<dbReference type="UCSC" id="uc002niq.4">
    <property type="organism name" value="human"/>
</dbReference>
<dbReference type="AGR" id="HGNC:17259"/>
<dbReference type="CTD" id="25804"/>
<dbReference type="DisGeNET" id="25804"/>
<dbReference type="GeneCards" id="LSM4"/>
<dbReference type="HGNC" id="HGNC:17259">
    <property type="gene designation" value="LSM4"/>
</dbReference>
<dbReference type="HPA" id="ENSG00000130520">
    <property type="expression patterns" value="Low tissue specificity"/>
</dbReference>
<dbReference type="MIM" id="607284">
    <property type="type" value="gene"/>
</dbReference>
<dbReference type="neXtProt" id="NX_Q9Y4Z0"/>
<dbReference type="OpenTargets" id="ENSG00000130520"/>
<dbReference type="PharmGKB" id="PA134906569"/>
<dbReference type="VEuPathDB" id="HostDB:ENSG00000130520"/>
<dbReference type="eggNOG" id="KOG3293">
    <property type="taxonomic scope" value="Eukaryota"/>
</dbReference>
<dbReference type="GeneTree" id="ENSGT00610000086173"/>
<dbReference type="HOGENOM" id="CLU_099537_2_1_1"/>
<dbReference type="InParanoid" id="Q9Y4Z0"/>
<dbReference type="OMA" id="RGAFGNR"/>
<dbReference type="OrthoDB" id="747253at2759"/>
<dbReference type="PAN-GO" id="Q9Y4Z0">
    <property type="GO annotations" value="6 GO annotations based on evolutionary models"/>
</dbReference>
<dbReference type="PhylomeDB" id="Q9Y4Z0"/>
<dbReference type="TreeFam" id="TF315027"/>
<dbReference type="PathwayCommons" id="Q9Y4Z0"/>
<dbReference type="Reactome" id="R-HSA-430039">
    <property type="pathway name" value="mRNA decay by 5' to 3' exoribonuclease"/>
</dbReference>
<dbReference type="Reactome" id="R-HSA-72163">
    <property type="pathway name" value="mRNA Splicing - Major Pathway"/>
</dbReference>
<dbReference type="SignaLink" id="Q9Y4Z0"/>
<dbReference type="SIGNOR" id="Q9Y4Z0"/>
<dbReference type="BioGRID-ORCS" id="25804">
    <property type="hits" value="795 hits in 1162 CRISPR screens"/>
</dbReference>
<dbReference type="CD-CODE" id="232F8A39">
    <property type="entry name" value="P-body"/>
</dbReference>
<dbReference type="ChiTaRS" id="LSM4">
    <property type="organism name" value="human"/>
</dbReference>
<dbReference type="GeneWiki" id="LSM4"/>
<dbReference type="GenomeRNAi" id="25804"/>
<dbReference type="Pharos" id="Q9Y4Z0">
    <property type="development level" value="Tbio"/>
</dbReference>
<dbReference type="PRO" id="PR:Q9Y4Z0"/>
<dbReference type="Proteomes" id="UP000005640">
    <property type="component" value="Chromosome 19"/>
</dbReference>
<dbReference type="RNAct" id="Q9Y4Z0">
    <property type="molecule type" value="protein"/>
</dbReference>
<dbReference type="Bgee" id="ENSG00000130520">
    <property type="expression patterns" value="Expressed in mucosa of transverse colon and 209 other cell types or tissues"/>
</dbReference>
<dbReference type="ExpressionAtlas" id="Q9Y4Z0">
    <property type="expression patterns" value="baseline and differential"/>
</dbReference>
<dbReference type="GO" id="GO:0005829">
    <property type="term" value="C:cytosol"/>
    <property type="evidence" value="ECO:0000314"/>
    <property type="project" value="CAFA"/>
</dbReference>
<dbReference type="GO" id="GO:0120115">
    <property type="term" value="C:Lsm2-8 complex"/>
    <property type="evidence" value="ECO:0000314"/>
    <property type="project" value="UniProtKB"/>
</dbReference>
<dbReference type="GO" id="GO:0016020">
    <property type="term" value="C:membrane"/>
    <property type="evidence" value="ECO:0000314"/>
    <property type="project" value="CAFA"/>
</dbReference>
<dbReference type="GO" id="GO:0005654">
    <property type="term" value="C:nucleoplasm"/>
    <property type="evidence" value="ECO:0000304"/>
    <property type="project" value="Reactome"/>
</dbReference>
<dbReference type="GO" id="GO:0005634">
    <property type="term" value="C:nucleus"/>
    <property type="evidence" value="ECO:0000314"/>
    <property type="project" value="UniProtKB"/>
</dbReference>
<dbReference type="GO" id="GO:0000932">
    <property type="term" value="C:P-body"/>
    <property type="evidence" value="ECO:0000318"/>
    <property type="project" value="GO_Central"/>
</dbReference>
<dbReference type="GO" id="GO:0032991">
    <property type="term" value="C:protein-containing complex"/>
    <property type="evidence" value="ECO:0000314"/>
    <property type="project" value="CAFA"/>
</dbReference>
<dbReference type="GO" id="GO:0097526">
    <property type="term" value="C:spliceosomal tri-snRNP complex"/>
    <property type="evidence" value="ECO:0000318"/>
    <property type="project" value="GO_Central"/>
</dbReference>
<dbReference type="GO" id="GO:0071005">
    <property type="term" value="C:U2-type precatalytic spliceosome"/>
    <property type="evidence" value="ECO:0000314"/>
    <property type="project" value="UniProtKB"/>
</dbReference>
<dbReference type="GO" id="GO:0046540">
    <property type="term" value="C:U4/U6 x U5 tri-snRNP complex"/>
    <property type="evidence" value="ECO:0000314"/>
    <property type="project" value="UniProtKB"/>
</dbReference>
<dbReference type="GO" id="GO:0005688">
    <property type="term" value="C:U6 snRNP"/>
    <property type="evidence" value="ECO:0000318"/>
    <property type="project" value="GO_Central"/>
</dbReference>
<dbReference type="GO" id="GO:0042731">
    <property type="term" value="F:PH domain binding"/>
    <property type="evidence" value="ECO:0000314"/>
    <property type="project" value="CAFA"/>
</dbReference>
<dbReference type="GO" id="GO:0003723">
    <property type="term" value="F:RNA binding"/>
    <property type="evidence" value="ECO:0007005"/>
    <property type="project" value="UniProtKB"/>
</dbReference>
<dbReference type="GO" id="GO:0017070">
    <property type="term" value="F:U6 snRNA binding"/>
    <property type="evidence" value="ECO:0000318"/>
    <property type="project" value="GO_Central"/>
</dbReference>
<dbReference type="GO" id="GO:0000398">
    <property type="term" value="P:mRNA splicing, via spliceosome"/>
    <property type="evidence" value="ECO:0000314"/>
    <property type="project" value="UniProtKB"/>
</dbReference>
<dbReference type="GO" id="GO:0000956">
    <property type="term" value="P:nuclear-transcribed mRNA catabolic process"/>
    <property type="evidence" value="ECO:0007669"/>
    <property type="project" value="InterPro"/>
</dbReference>
<dbReference type="GO" id="GO:0033962">
    <property type="term" value="P:P-body assembly"/>
    <property type="evidence" value="ECO:0000318"/>
    <property type="project" value="GO_Central"/>
</dbReference>
<dbReference type="GO" id="GO:0008380">
    <property type="term" value="P:RNA splicing"/>
    <property type="evidence" value="ECO:0000304"/>
    <property type="project" value="ProtInc"/>
</dbReference>
<dbReference type="GO" id="GO:0000387">
    <property type="term" value="P:spliceosomal snRNP assembly"/>
    <property type="evidence" value="ECO:0000318"/>
    <property type="project" value="GO_Central"/>
</dbReference>
<dbReference type="CDD" id="cd01723">
    <property type="entry name" value="LSm4"/>
    <property type="match status" value="1"/>
</dbReference>
<dbReference type="FunFam" id="2.30.30.100:FF:000005">
    <property type="entry name" value="U6 snRNA-associated Sm-like protein LSm4"/>
    <property type="match status" value="1"/>
</dbReference>
<dbReference type="Gene3D" id="2.30.30.100">
    <property type="match status" value="1"/>
</dbReference>
<dbReference type="InterPro" id="IPR034101">
    <property type="entry name" value="Lsm4"/>
</dbReference>
<dbReference type="InterPro" id="IPR027141">
    <property type="entry name" value="LSm4/Sm_D1/D3"/>
</dbReference>
<dbReference type="InterPro" id="IPR010920">
    <property type="entry name" value="LSM_dom_sf"/>
</dbReference>
<dbReference type="InterPro" id="IPR047575">
    <property type="entry name" value="Sm"/>
</dbReference>
<dbReference type="InterPro" id="IPR001163">
    <property type="entry name" value="Sm_dom_euk/arc"/>
</dbReference>
<dbReference type="PANTHER" id="PTHR23338">
    <property type="entry name" value="SMALL NUCLEAR RIBONUCLEOPROTEIN SM"/>
    <property type="match status" value="1"/>
</dbReference>
<dbReference type="Pfam" id="PF01423">
    <property type="entry name" value="LSM"/>
    <property type="match status" value="1"/>
</dbReference>
<dbReference type="SMART" id="SM00651">
    <property type="entry name" value="Sm"/>
    <property type="match status" value="1"/>
</dbReference>
<dbReference type="SUPFAM" id="SSF50182">
    <property type="entry name" value="Sm-like ribonucleoproteins"/>
    <property type="match status" value="1"/>
</dbReference>
<dbReference type="PROSITE" id="PS52002">
    <property type="entry name" value="SM"/>
    <property type="match status" value="1"/>
</dbReference>
<keyword id="KW-0002">3D-structure</keyword>
<keyword id="KW-0007">Acetylation</keyword>
<keyword id="KW-0903">Direct protein sequencing</keyword>
<keyword id="KW-1017">Isopeptide bond</keyword>
<keyword id="KW-0507">mRNA processing</keyword>
<keyword id="KW-0508">mRNA splicing</keyword>
<keyword id="KW-0539">Nucleus</keyword>
<keyword id="KW-1267">Proteomics identification</keyword>
<keyword id="KW-1185">Reference proteome</keyword>
<keyword id="KW-0687">Ribonucleoprotein</keyword>
<keyword id="KW-0694">RNA-binding</keyword>
<keyword id="KW-0747">Spliceosome</keyword>
<keyword id="KW-0832">Ubl conjugation</keyword>
<proteinExistence type="evidence at protein level"/>
<feature type="chain" id="PRO_0000125564" description="U6 snRNA-associated Sm-like protein LSm4">
    <location>
        <begin position="1"/>
        <end position="139"/>
    </location>
</feature>
<feature type="domain" description="Sm" evidence="1">
    <location>
        <begin position="2"/>
        <end position="75"/>
    </location>
</feature>
<feature type="region of interest" description="Disordered" evidence="2">
    <location>
        <begin position="87"/>
        <end position="139"/>
    </location>
</feature>
<feature type="compositionally biased region" description="Gly residues" evidence="2">
    <location>
        <begin position="102"/>
        <end position="125"/>
    </location>
</feature>
<feature type="modified residue" description="N-acetylmethionine" evidence="6">
    <location>
        <position position="1"/>
    </location>
</feature>
<feature type="cross-link" description="Glycyl lysine isopeptide (Lys-Gly) (interchain with G-Cter in SUMO2)" evidence="10">
    <location>
        <position position="80"/>
    </location>
</feature>
<accession>Q9Y4Z0</accession>
<sequence>MLPLSLLKTAQNHPMLVELKNGETYNGHLVSCDNWMNINLREVICTSRDGDKFWRMPECYIRGSTIKYLRIPDEIIDMVKEEVVAKGRGRGGLQQQKQQKGRGMGGAGRGVFGGRGRGGIPGTGRGQPEKKPGRQAGKQ</sequence>
<organism>
    <name type="scientific">Homo sapiens</name>
    <name type="common">Human</name>
    <dbReference type="NCBI Taxonomy" id="9606"/>
    <lineage>
        <taxon>Eukaryota</taxon>
        <taxon>Metazoa</taxon>
        <taxon>Chordata</taxon>
        <taxon>Craniata</taxon>
        <taxon>Vertebrata</taxon>
        <taxon>Euteleostomi</taxon>
        <taxon>Mammalia</taxon>
        <taxon>Eutheria</taxon>
        <taxon>Euarchontoglires</taxon>
        <taxon>Primates</taxon>
        <taxon>Haplorrhini</taxon>
        <taxon>Catarrhini</taxon>
        <taxon>Hominidae</taxon>
        <taxon>Homo</taxon>
    </lineage>
</organism>